<sequence length="670" mass="72950">MSAIQLQIANLVNELNQHNIKYYVDDAPSVTDAYYDKLMQQLLALEAEHPELIQSDSPSRRVGGHALDKFSQVTHLKPMLSLDNAFEQADFEAFNKRITDKVGTVDYVCEPKLDGLAVSITYRNGQFERAATRGDGTVGEDITENVRTIKSIPMGLRGDGYPELVEVRGEVFMPKAAFDALNARQQAKGDKTFVNPRNAAAGSLRQLDSKITASRALGFYAYALGVVEGEVQPMEPSHFGQLAQLKRWGLPVSQEVKLCDSLEKVYAYYDDILNRRGQLSYEIDGVVIKVNAIPKQLSLGFVAKAPRWAIAYKFPAQEEMTLLESVDFQVGRTGAVTPVARLQAVFVGGVTVSNATLHNADEIARLGVKIGDTVIIRRAGDVIPQIVAIVPEKRPQDAQNIVFPTHCPVCQSLVERLEGEAVARCSGGLFCEAQRKEAIKHFASRKALNIDGMGDKIVEQLIDKELVQSPADLFGLTASMMTMLERMAMKSATKLVAAIDAAKTTTLARFIYSLGIREVGEATAANLANHFKSLAAVREAGVEQLLEVADVGEIVAKHIRHFFDQAHNLEVVDKLLAAGINWPEITAVAEDELRLKGQTWVLTGTLTQLNRNEAKAQLQALGAKVAGSISKNTDCLVAGEAAGSKLAKAQELGVKVIDETELLVFLGLAG</sequence>
<gene>
    <name evidence="1" type="primary">ligA</name>
    <name type="ordered locus">Sden_2514</name>
</gene>
<feature type="chain" id="PRO_0000313425" description="DNA ligase">
    <location>
        <begin position="1"/>
        <end position="670"/>
    </location>
</feature>
<feature type="domain" description="BRCT" evidence="1">
    <location>
        <begin position="590"/>
        <end position="670"/>
    </location>
</feature>
<feature type="active site" description="N6-AMP-lysine intermediate" evidence="1">
    <location>
        <position position="112"/>
    </location>
</feature>
<feature type="binding site" evidence="1">
    <location>
        <begin position="32"/>
        <end position="36"/>
    </location>
    <ligand>
        <name>NAD(+)</name>
        <dbReference type="ChEBI" id="CHEBI:57540"/>
    </ligand>
</feature>
<feature type="binding site" evidence="1">
    <location>
        <begin position="81"/>
        <end position="82"/>
    </location>
    <ligand>
        <name>NAD(+)</name>
        <dbReference type="ChEBI" id="CHEBI:57540"/>
    </ligand>
</feature>
<feature type="binding site" evidence="1">
    <location>
        <position position="110"/>
    </location>
    <ligand>
        <name>NAD(+)</name>
        <dbReference type="ChEBI" id="CHEBI:57540"/>
    </ligand>
</feature>
<feature type="binding site" evidence="1">
    <location>
        <position position="133"/>
    </location>
    <ligand>
        <name>NAD(+)</name>
        <dbReference type="ChEBI" id="CHEBI:57540"/>
    </ligand>
</feature>
<feature type="binding site" evidence="1">
    <location>
        <position position="170"/>
    </location>
    <ligand>
        <name>NAD(+)</name>
        <dbReference type="ChEBI" id="CHEBI:57540"/>
    </ligand>
</feature>
<feature type="binding site" evidence="1">
    <location>
        <position position="289"/>
    </location>
    <ligand>
        <name>NAD(+)</name>
        <dbReference type="ChEBI" id="CHEBI:57540"/>
    </ligand>
</feature>
<feature type="binding site" evidence="1">
    <location>
        <position position="313"/>
    </location>
    <ligand>
        <name>NAD(+)</name>
        <dbReference type="ChEBI" id="CHEBI:57540"/>
    </ligand>
</feature>
<feature type="binding site" evidence="1">
    <location>
        <position position="407"/>
    </location>
    <ligand>
        <name>Zn(2+)</name>
        <dbReference type="ChEBI" id="CHEBI:29105"/>
    </ligand>
</feature>
<feature type="binding site" evidence="1">
    <location>
        <position position="410"/>
    </location>
    <ligand>
        <name>Zn(2+)</name>
        <dbReference type="ChEBI" id="CHEBI:29105"/>
    </ligand>
</feature>
<feature type="binding site" evidence="1">
    <location>
        <position position="425"/>
    </location>
    <ligand>
        <name>Zn(2+)</name>
        <dbReference type="ChEBI" id="CHEBI:29105"/>
    </ligand>
</feature>
<feature type="binding site" evidence="1">
    <location>
        <position position="431"/>
    </location>
    <ligand>
        <name>Zn(2+)</name>
        <dbReference type="ChEBI" id="CHEBI:29105"/>
    </ligand>
</feature>
<dbReference type="EC" id="6.5.1.2" evidence="1"/>
<dbReference type="EMBL" id="CP000302">
    <property type="protein sequence ID" value="ABE55794.1"/>
    <property type="molecule type" value="Genomic_DNA"/>
</dbReference>
<dbReference type="RefSeq" id="WP_011496945.1">
    <property type="nucleotide sequence ID" value="NC_007954.1"/>
</dbReference>
<dbReference type="SMR" id="Q12L82"/>
<dbReference type="STRING" id="318161.Sden_2514"/>
<dbReference type="KEGG" id="sdn:Sden_2514"/>
<dbReference type="eggNOG" id="COG0272">
    <property type="taxonomic scope" value="Bacteria"/>
</dbReference>
<dbReference type="HOGENOM" id="CLU_007764_2_1_6"/>
<dbReference type="OrthoDB" id="9759736at2"/>
<dbReference type="Proteomes" id="UP000001982">
    <property type="component" value="Chromosome"/>
</dbReference>
<dbReference type="GO" id="GO:0005829">
    <property type="term" value="C:cytosol"/>
    <property type="evidence" value="ECO:0007669"/>
    <property type="project" value="TreeGrafter"/>
</dbReference>
<dbReference type="GO" id="GO:0003677">
    <property type="term" value="F:DNA binding"/>
    <property type="evidence" value="ECO:0007669"/>
    <property type="project" value="InterPro"/>
</dbReference>
<dbReference type="GO" id="GO:0003911">
    <property type="term" value="F:DNA ligase (NAD+) activity"/>
    <property type="evidence" value="ECO:0007669"/>
    <property type="project" value="UniProtKB-UniRule"/>
</dbReference>
<dbReference type="GO" id="GO:0046872">
    <property type="term" value="F:metal ion binding"/>
    <property type="evidence" value="ECO:0007669"/>
    <property type="project" value="UniProtKB-KW"/>
</dbReference>
<dbReference type="GO" id="GO:0006281">
    <property type="term" value="P:DNA repair"/>
    <property type="evidence" value="ECO:0007669"/>
    <property type="project" value="UniProtKB-KW"/>
</dbReference>
<dbReference type="GO" id="GO:0006260">
    <property type="term" value="P:DNA replication"/>
    <property type="evidence" value="ECO:0007669"/>
    <property type="project" value="UniProtKB-KW"/>
</dbReference>
<dbReference type="CDD" id="cd17748">
    <property type="entry name" value="BRCT_DNA_ligase_like"/>
    <property type="match status" value="1"/>
</dbReference>
<dbReference type="CDD" id="cd00114">
    <property type="entry name" value="LIGANc"/>
    <property type="match status" value="1"/>
</dbReference>
<dbReference type="FunFam" id="1.10.150.20:FF:000006">
    <property type="entry name" value="DNA ligase"/>
    <property type="match status" value="1"/>
</dbReference>
<dbReference type="FunFam" id="1.10.150.20:FF:000007">
    <property type="entry name" value="DNA ligase"/>
    <property type="match status" value="1"/>
</dbReference>
<dbReference type="FunFam" id="1.10.287.610:FF:000002">
    <property type="entry name" value="DNA ligase"/>
    <property type="match status" value="1"/>
</dbReference>
<dbReference type="FunFam" id="2.40.50.140:FF:000012">
    <property type="entry name" value="DNA ligase"/>
    <property type="match status" value="1"/>
</dbReference>
<dbReference type="FunFam" id="3.30.470.30:FF:000001">
    <property type="entry name" value="DNA ligase"/>
    <property type="match status" value="1"/>
</dbReference>
<dbReference type="FunFam" id="6.20.10.30:FF:000001">
    <property type="entry name" value="DNA ligase"/>
    <property type="match status" value="1"/>
</dbReference>
<dbReference type="Gene3D" id="6.20.10.30">
    <property type="match status" value="1"/>
</dbReference>
<dbReference type="Gene3D" id="1.10.150.20">
    <property type="entry name" value="5' to 3' exonuclease, C-terminal subdomain"/>
    <property type="match status" value="2"/>
</dbReference>
<dbReference type="Gene3D" id="3.40.50.10190">
    <property type="entry name" value="BRCT domain"/>
    <property type="match status" value="1"/>
</dbReference>
<dbReference type="Gene3D" id="3.30.470.30">
    <property type="entry name" value="DNA ligase/mRNA capping enzyme"/>
    <property type="match status" value="1"/>
</dbReference>
<dbReference type="Gene3D" id="1.10.287.610">
    <property type="entry name" value="Helix hairpin bin"/>
    <property type="match status" value="1"/>
</dbReference>
<dbReference type="Gene3D" id="2.40.50.140">
    <property type="entry name" value="Nucleic acid-binding proteins"/>
    <property type="match status" value="1"/>
</dbReference>
<dbReference type="HAMAP" id="MF_01588">
    <property type="entry name" value="DNA_ligase_A"/>
    <property type="match status" value="1"/>
</dbReference>
<dbReference type="InterPro" id="IPR001357">
    <property type="entry name" value="BRCT_dom"/>
</dbReference>
<dbReference type="InterPro" id="IPR036420">
    <property type="entry name" value="BRCT_dom_sf"/>
</dbReference>
<dbReference type="InterPro" id="IPR041663">
    <property type="entry name" value="DisA/LigA_HHH"/>
</dbReference>
<dbReference type="InterPro" id="IPR001679">
    <property type="entry name" value="DNA_ligase"/>
</dbReference>
<dbReference type="InterPro" id="IPR018239">
    <property type="entry name" value="DNA_ligase_AS"/>
</dbReference>
<dbReference type="InterPro" id="IPR013839">
    <property type="entry name" value="DNAligase_adenylation"/>
</dbReference>
<dbReference type="InterPro" id="IPR013840">
    <property type="entry name" value="DNAligase_N"/>
</dbReference>
<dbReference type="InterPro" id="IPR003583">
    <property type="entry name" value="Hlx-hairpin-Hlx_DNA-bd_motif"/>
</dbReference>
<dbReference type="InterPro" id="IPR012340">
    <property type="entry name" value="NA-bd_OB-fold"/>
</dbReference>
<dbReference type="InterPro" id="IPR004150">
    <property type="entry name" value="NAD_DNA_ligase_OB"/>
</dbReference>
<dbReference type="InterPro" id="IPR010994">
    <property type="entry name" value="RuvA_2-like"/>
</dbReference>
<dbReference type="InterPro" id="IPR004149">
    <property type="entry name" value="Znf_DNAligase_C4"/>
</dbReference>
<dbReference type="NCBIfam" id="TIGR00575">
    <property type="entry name" value="dnlj"/>
    <property type="match status" value="1"/>
</dbReference>
<dbReference type="NCBIfam" id="NF005932">
    <property type="entry name" value="PRK07956.1"/>
    <property type="match status" value="1"/>
</dbReference>
<dbReference type="PANTHER" id="PTHR23389">
    <property type="entry name" value="CHROMOSOME TRANSMISSION FIDELITY FACTOR 18"/>
    <property type="match status" value="1"/>
</dbReference>
<dbReference type="PANTHER" id="PTHR23389:SF9">
    <property type="entry name" value="DNA LIGASE"/>
    <property type="match status" value="1"/>
</dbReference>
<dbReference type="Pfam" id="PF00533">
    <property type="entry name" value="BRCT"/>
    <property type="match status" value="1"/>
</dbReference>
<dbReference type="Pfam" id="PF01653">
    <property type="entry name" value="DNA_ligase_aden"/>
    <property type="match status" value="1"/>
</dbReference>
<dbReference type="Pfam" id="PF03120">
    <property type="entry name" value="DNA_ligase_OB"/>
    <property type="match status" value="1"/>
</dbReference>
<dbReference type="Pfam" id="PF03119">
    <property type="entry name" value="DNA_ligase_ZBD"/>
    <property type="match status" value="1"/>
</dbReference>
<dbReference type="Pfam" id="PF12826">
    <property type="entry name" value="HHH_2"/>
    <property type="match status" value="1"/>
</dbReference>
<dbReference type="Pfam" id="PF22745">
    <property type="entry name" value="Nlig-Ia"/>
    <property type="match status" value="1"/>
</dbReference>
<dbReference type="PIRSF" id="PIRSF001604">
    <property type="entry name" value="LigA"/>
    <property type="match status" value="1"/>
</dbReference>
<dbReference type="SMART" id="SM00292">
    <property type="entry name" value="BRCT"/>
    <property type="match status" value="1"/>
</dbReference>
<dbReference type="SMART" id="SM00278">
    <property type="entry name" value="HhH1"/>
    <property type="match status" value="3"/>
</dbReference>
<dbReference type="SMART" id="SM00532">
    <property type="entry name" value="LIGANc"/>
    <property type="match status" value="1"/>
</dbReference>
<dbReference type="SUPFAM" id="SSF52113">
    <property type="entry name" value="BRCT domain"/>
    <property type="match status" value="1"/>
</dbReference>
<dbReference type="SUPFAM" id="SSF56091">
    <property type="entry name" value="DNA ligase/mRNA capping enzyme, catalytic domain"/>
    <property type="match status" value="1"/>
</dbReference>
<dbReference type="SUPFAM" id="SSF50249">
    <property type="entry name" value="Nucleic acid-binding proteins"/>
    <property type="match status" value="1"/>
</dbReference>
<dbReference type="SUPFAM" id="SSF47781">
    <property type="entry name" value="RuvA domain 2-like"/>
    <property type="match status" value="1"/>
</dbReference>
<dbReference type="PROSITE" id="PS50172">
    <property type="entry name" value="BRCT"/>
    <property type="match status" value="1"/>
</dbReference>
<dbReference type="PROSITE" id="PS01055">
    <property type="entry name" value="DNA_LIGASE_N1"/>
    <property type="match status" value="1"/>
</dbReference>
<organism>
    <name type="scientific">Shewanella denitrificans (strain OS217 / ATCC BAA-1090 / DSM 15013)</name>
    <dbReference type="NCBI Taxonomy" id="318161"/>
    <lineage>
        <taxon>Bacteria</taxon>
        <taxon>Pseudomonadati</taxon>
        <taxon>Pseudomonadota</taxon>
        <taxon>Gammaproteobacteria</taxon>
        <taxon>Alteromonadales</taxon>
        <taxon>Shewanellaceae</taxon>
        <taxon>Shewanella</taxon>
    </lineage>
</organism>
<reference key="1">
    <citation type="submission" date="2006-03" db="EMBL/GenBank/DDBJ databases">
        <title>Complete sequence of Shewanella denitrificans OS217.</title>
        <authorList>
            <consortium name="US DOE Joint Genome Institute"/>
            <person name="Copeland A."/>
            <person name="Lucas S."/>
            <person name="Lapidus A."/>
            <person name="Barry K."/>
            <person name="Detter J.C."/>
            <person name="Glavina del Rio T."/>
            <person name="Hammon N."/>
            <person name="Israni S."/>
            <person name="Dalin E."/>
            <person name="Tice H."/>
            <person name="Pitluck S."/>
            <person name="Brettin T."/>
            <person name="Bruce D."/>
            <person name="Han C."/>
            <person name="Tapia R."/>
            <person name="Gilna P."/>
            <person name="Kiss H."/>
            <person name="Schmutz J."/>
            <person name="Larimer F."/>
            <person name="Land M."/>
            <person name="Hauser L."/>
            <person name="Kyrpides N."/>
            <person name="Lykidis A."/>
            <person name="Richardson P."/>
        </authorList>
    </citation>
    <scope>NUCLEOTIDE SEQUENCE [LARGE SCALE GENOMIC DNA]</scope>
    <source>
        <strain>OS217 / ATCC BAA-1090 / DSM 15013</strain>
    </source>
</reference>
<accession>Q12L82</accession>
<name>DNLJ_SHEDO</name>
<comment type="function">
    <text evidence="1">DNA ligase that catalyzes the formation of phosphodiester linkages between 5'-phosphoryl and 3'-hydroxyl groups in double-stranded DNA using NAD as a coenzyme and as the energy source for the reaction. It is essential for DNA replication and repair of damaged DNA.</text>
</comment>
<comment type="catalytic activity">
    <reaction evidence="1">
        <text>NAD(+) + (deoxyribonucleotide)n-3'-hydroxyl + 5'-phospho-(deoxyribonucleotide)m = (deoxyribonucleotide)n+m + AMP + beta-nicotinamide D-nucleotide.</text>
        <dbReference type="EC" id="6.5.1.2"/>
    </reaction>
</comment>
<comment type="cofactor">
    <cofactor evidence="1">
        <name>Mg(2+)</name>
        <dbReference type="ChEBI" id="CHEBI:18420"/>
    </cofactor>
    <cofactor evidence="1">
        <name>Mn(2+)</name>
        <dbReference type="ChEBI" id="CHEBI:29035"/>
    </cofactor>
</comment>
<comment type="similarity">
    <text evidence="1">Belongs to the NAD-dependent DNA ligase family. LigA subfamily.</text>
</comment>
<protein>
    <recommendedName>
        <fullName evidence="1">DNA ligase</fullName>
        <ecNumber evidence="1">6.5.1.2</ecNumber>
    </recommendedName>
    <alternativeName>
        <fullName evidence="1">Polydeoxyribonucleotide synthase [NAD(+)]</fullName>
    </alternativeName>
</protein>
<keyword id="KW-0227">DNA damage</keyword>
<keyword id="KW-0234">DNA repair</keyword>
<keyword id="KW-0235">DNA replication</keyword>
<keyword id="KW-0436">Ligase</keyword>
<keyword id="KW-0460">Magnesium</keyword>
<keyword id="KW-0464">Manganese</keyword>
<keyword id="KW-0479">Metal-binding</keyword>
<keyword id="KW-0520">NAD</keyword>
<keyword id="KW-1185">Reference proteome</keyword>
<keyword id="KW-0862">Zinc</keyword>
<evidence type="ECO:0000255" key="1">
    <source>
        <dbReference type="HAMAP-Rule" id="MF_01588"/>
    </source>
</evidence>
<proteinExistence type="inferred from homology"/>